<keyword id="KW-0090">Biological rhythms</keyword>
<keyword id="KW-0963">Cytoplasm</keyword>
<keyword id="KW-0539">Nucleus</keyword>
<keyword id="KW-0597">Phosphoprotein</keyword>
<keyword id="KW-0677">Repeat</keyword>
<proteinExistence type="inferred from homology"/>
<protein>
    <recommendedName>
        <fullName>Period circadian protein</fullName>
    </recommendedName>
</protein>
<name>PER_DROMO</name>
<evidence type="ECO:0000250" key="1"/>
<evidence type="ECO:0000256" key="2">
    <source>
        <dbReference type="SAM" id="MobiDB-lite"/>
    </source>
</evidence>
<feature type="chain" id="PRO_0000162597" description="Period circadian protein">
    <location>
        <begin position="1" status="less than"/>
        <end position="65" status="greater than"/>
    </location>
</feature>
<feature type="region of interest" description="Disordered" evidence="2">
    <location>
        <begin position="1"/>
        <end position="65"/>
    </location>
</feature>
<feature type="compositionally biased region" description="Polar residues" evidence="2">
    <location>
        <begin position="18"/>
        <end position="28"/>
    </location>
</feature>
<feature type="compositionally biased region" description="Low complexity" evidence="2">
    <location>
        <begin position="29"/>
        <end position="38"/>
    </location>
</feature>
<feature type="compositionally biased region" description="Polar residues" evidence="2">
    <location>
        <begin position="56"/>
        <end position="65"/>
    </location>
</feature>
<feature type="non-terminal residue">
    <location>
        <position position="1"/>
    </location>
</feature>
<feature type="non-terminal residue">
    <location>
        <position position="65"/>
    </location>
</feature>
<organism>
    <name type="scientific">Drosophila mojavensis</name>
    <name type="common">Fruit fly</name>
    <dbReference type="NCBI Taxonomy" id="7230"/>
    <lineage>
        <taxon>Eukaryota</taxon>
        <taxon>Metazoa</taxon>
        <taxon>Ecdysozoa</taxon>
        <taxon>Arthropoda</taxon>
        <taxon>Hexapoda</taxon>
        <taxon>Insecta</taxon>
        <taxon>Pterygota</taxon>
        <taxon>Neoptera</taxon>
        <taxon>Endopterygota</taxon>
        <taxon>Diptera</taxon>
        <taxon>Brachycera</taxon>
        <taxon>Muscomorpha</taxon>
        <taxon>Ephydroidea</taxon>
        <taxon>Drosophilidae</taxon>
        <taxon>Drosophila</taxon>
    </lineage>
</organism>
<gene>
    <name type="primary">per</name>
</gene>
<sequence>EGSGGSGSSGNFTTGSNVRMSSVTNTSNAGTGTSAGDNSAGGNGSGNSNSAPAVTVTLTESLLNK</sequence>
<comment type="function">
    <text evidence="1">Essential for biological clock functions. Determines the period length of circadian and ultradian rhythms; an increase in PER dosage leads to shortened circadian rhythms and a decrease leads to lengthened circadian rhythms. Essential for the circadian rhythmicity of locomotor activity, eclosion behavior, and for the rhythmic component of the male courtship song that originates in the thoracic nervous system. The biological cycle depends on the rhythmic formation and nuclear localization of the TIM-PER complex. Light induces the degradation of TIM, which promotes elimination of PER. Nuclear activity of the heterodimer coordinatively regulates PER and TIM transcription through a negative feedback loop. Behaves as a negative element in circadian transcriptional loop. Does not appear to bind DNA, suggesting indirect transcriptional inhibition (By similarity).</text>
</comment>
<comment type="subunit">
    <text evidence="1">Forms a heterodimer with timeless (TIM); the complex then translocates into the nucleus.</text>
</comment>
<comment type="subcellular location">
    <subcellularLocation>
        <location evidence="1">Nucleus</location>
    </subcellularLocation>
    <subcellularLocation>
        <location evidence="1">Cytoplasm</location>
        <location evidence="1">Perinuclear region</location>
    </subcellularLocation>
    <text evidence="1">Nuclear at specific periods of the day. First accumulates in the perinuclear region about one hour before translocation into the nucleus. Interaction with Tim is required for nuclear localization (By similarity).</text>
</comment>
<comment type="PTM">
    <text evidence="1">Phosphorylated with a circadian rhythmicity, probably by the double-time protein (dbt). Phosphorylation could be implicated in the stability of per monomer and in the formation of heterodimer per-tim (By similarity).</text>
</comment>
<dbReference type="EMBL" id="L06339">
    <property type="protein sequence ID" value="AAA28762.1"/>
    <property type="molecule type" value="Genomic_DNA"/>
</dbReference>
<dbReference type="eggNOG" id="KOG3753">
    <property type="taxonomic scope" value="Eukaryota"/>
</dbReference>
<dbReference type="GO" id="GO:0005634">
    <property type="term" value="C:nucleus"/>
    <property type="evidence" value="ECO:0007669"/>
    <property type="project" value="UniProtKB-SubCell"/>
</dbReference>
<dbReference type="GO" id="GO:0048471">
    <property type="term" value="C:perinuclear region of cytoplasm"/>
    <property type="evidence" value="ECO:0007669"/>
    <property type="project" value="UniProtKB-SubCell"/>
</dbReference>
<dbReference type="GO" id="GO:0048511">
    <property type="term" value="P:rhythmic process"/>
    <property type="evidence" value="ECO:0007669"/>
    <property type="project" value="UniProtKB-KW"/>
</dbReference>
<accession>Q03295</accession>
<reference key="1">
    <citation type="journal article" date="1993" name="Mol. Biol. Evol.">
        <title>Molecular evolution of a repetitive region within the per gene of Drosophila.</title>
        <authorList>
            <person name="Peixoto A.A."/>
            <person name="Campesan S."/>
            <person name="Costa R.H."/>
            <person name="Kyriacou C.P."/>
        </authorList>
    </citation>
    <scope>NUCLEOTIDE SEQUENCE [GENOMIC DNA]</scope>
</reference>